<protein>
    <recommendedName>
        <fullName evidence="1">1,4-alpha-glucan branching enzyme GlgB</fullName>
        <ecNumber evidence="1">2.4.1.18</ecNumber>
    </recommendedName>
    <alternativeName>
        <fullName evidence="1">1,4-alpha-D-glucan:1,4-alpha-D-glucan 6-glucosyl-transferase</fullName>
    </alternativeName>
    <alternativeName>
        <fullName evidence="1">Alpha-(1-&gt;4)-glucan branching enzyme</fullName>
    </alternativeName>
    <alternativeName>
        <fullName evidence="1">Glycogen branching enzyme</fullName>
        <shortName evidence="1">BE</shortName>
    </alternativeName>
</protein>
<reference key="1">
    <citation type="submission" date="2006-05" db="EMBL/GenBank/DDBJ databases">
        <title>Complete sequence of chromosome 1 of Burkholderia cenocepacia AU 1054.</title>
        <authorList>
            <consortium name="US DOE Joint Genome Institute"/>
            <person name="Copeland A."/>
            <person name="Lucas S."/>
            <person name="Lapidus A."/>
            <person name="Barry K."/>
            <person name="Detter J.C."/>
            <person name="Glavina del Rio T."/>
            <person name="Hammon N."/>
            <person name="Israni S."/>
            <person name="Dalin E."/>
            <person name="Tice H."/>
            <person name="Pitluck S."/>
            <person name="Chain P."/>
            <person name="Malfatti S."/>
            <person name="Shin M."/>
            <person name="Vergez L."/>
            <person name="Schmutz J."/>
            <person name="Larimer F."/>
            <person name="Land M."/>
            <person name="Hauser L."/>
            <person name="Kyrpides N."/>
            <person name="Lykidis A."/>
            <person name="LiPuma J.J."/>
            <person name="Konstantinidis K."/>
            <person name="Tiedje J.M."/>
            <person name="Richardson P."/>
        </authorList>
    </citation>
    <scope>NUCLEOTIDE SEQUENCE [LARGE SCALE GENOMIC DNA]</scope>
    <source>
        <strain>AU 1054</strain>
    </source>
</reference>
<keyword id="KW-0119">Carbohydrate metabolism</keyword>
<keyword id="KW-0320">Glycogen biosynthesis</keyword>
<keyword id="KW-0321">Glycogen metabolism</keyword>
<keyword id="KW-0328">Glycosyltransferase</keyword>
<keyword id="KW-0808">Transferase</keyword>
<sequence>MTDTLFDRADIDALLAGRHPDPFACLGPHRHDDQIVVRALLPGAERVRALSPDGAELGTLACVDRAGCFAGTIAHDGGAPHYLLSIDWPDAHQVTDDAYAFGTLLDEAALARFSAGDPEAVLDCLGATPVRIDDTDGVRFAVWAPSAQRVSVVGDFNAWDGRRHPMRLRRPSGVWELFVPGIGAGERYKYELCAADGRVLPHKADPCARATEAPPRTASVVADVAALHAFAWHDDGWMHARPRHDDRYRVPWSIYEVHPESWQRIPEQMDRSATWDELAERLIPYVKGMGFTHVEFMPIAEYPFGGSWGYQPLAQFAPSARFGPVEGFARFVDRAHAAGIGVLVDWVPAHFPNDAHGLAQFDGSALYEHADPREGMHPDWNTCVFNVGRTEVSAFLVASALAWARRYHVDGIRVDAVASMLYRDYSRKEGEWVPNVYGGRENLESVAFLRRLNDTLHGDAAPAGVVTVAEESTAWPGVTAPTADGGLGFDFKWNMGWMHDTLAYLHEDPIHRRYHHDRMTFGLVYAFSERFVLPLSHDEVVHGKGSLVAKMPGDAWQRLATLRAYFGFMWAHPGKKLLFMGSEFAQWSEFAHDATPHWDLLDAPAHRGVQRLVRDLNRAYAAEPALHALDCHAAGFAWLIGDDRDNSVFAFARRDDTGRLVVAVCNFTPVPRAGYRLGLPAPGHWRELMNTDAASYGGANAGNDGAVWAEAVPAHGEAWSASLRLPPLATLWLTPA</sequence>
<feature type="chain" id="PRO_0000260637" description="1,4-alpha-glucan branching enzyme GlgB">
    <location>
        <begin position="1"/>
        <end position="736"/>
    </location>
</feature>
<feature type="active site" description="Nucleophile" evidence="1">
    <location>
        <position position="415"/>
    </location>
</feature>
<feature type="active site" description="Proton donor" evidence="1">
    <location>
        <position position="470"/>
    </location>
</feature>
<organism>
    <name type="scientific">Burkholderia orbicola (strain AU 1054)</name>
    <dbReference type="NCBI Taxonomy" id="331271"/>
    <lineage>
        <taxon>Bacteria</taxon>
        <taxon>Pseudomonadati</taxon>
        <taxon>Pseudomonadota</taxon>
        <taxon>Betaproteobacteria</taxon>
        <taxon>Burkholderiales</taxon>
        <taxon>Burkholderiaceae</taxon>
        <taxon>Burkholderia</taxon>
        <taxon>Burkholderia cepacia complex</taxon>
        <taxon>Burkholderia orbicola</taxon>
    </lineage>
</organism>
<name>GLGB_BURO1</name>
<accession>Q1BVW7</accession>
<proteinExistence type="inferred from homology"/>
<gene>
    <name evidence="1" type="primary">glgB</name>
    <name type="ordered locus">Bcen_1332</name>
</gene>
<evidence type="ECO:0000255" key="1">
    <source>
        <dbReference type="HAMAP-Rule" id="MF_00685"/>
    </source>
</evidence>
<comment type="function">
    <text evidence="1">Catalyzes the formation of the alpha-1,6-glucosidic linkages in glycogen by scission of a 1,4-alpha-linked oligosaccharide from growing alpha-1,4-glucan chains and the subsequent attachment of the oligosaccharide to the alpha-1,6 position.</text>
</comment>
<comment type="catalytic activity">
    <reaction evidence="1">
        <text>Transfers a segment of a (1-&gt;4)-alpha-D-glucan chain to a primary hydroxy group in a similar glucan chain.</text>
        <dbReference type="EC" id="2.4.1.18"/>
    </reaction>
</comment>
<comment type="pathway">
    <text evidence="1">Glycan biosynthesis; glycogen biosynthesis.</text>
</comment>
<comment type="subunit">
    <text evidence="1">Monomer.</text>
</comment>
<comment type="similarity">
    <text evidence="1">Belongs to the glycosyl hydrolase 13 family. GlgB subfamily.</text>
</comment>
<dbReference type="EC" id="2.4.1.18" evidence="1"/>
<dbReference type="EMBL" id="CP000378">
    <property type="protein sequence ID" value="ABF76238.1"/>
    <property type="molecule type" value="Genomic_DNA"/>
</dbReference>
<dbReference type="SMR" id="Q1BVW7"/>
<dbReference type="CAZy" id="CBM48">
    <property type="family name" value="Carbohydrate-Binding Module Family 48"/>
</dbReference>
<dbReference type="CAZy" id="GH13">
    <property type="family name" value="Glycoside Hydrolase Family 13"/>
</dbReference>
<dbReference type="HOGENOM" id="CLU_004245_3_2_4"/>
<dbReference type="UniPathway" id="UPA00164"/>
<dbReference type="GO" id="GO:0005829">
    <property type="term" value="C:cytosol"/>
    <property type="evidence" value="ECO:0007669"/>
    <property type="project" value="TreeGrafter"/>
</dbReference>
<dbReference type="GO" id="GO:0003844">
    <property type="term" value="F:1,4-alpha-glucan branching enzyme activity"/>
    <property type="evidence" value="ECO:0007669"/>
    <property type="project" value="UniProtKB-UniRule"/>
</dbReference>
<dbReference type="GO" id="GO:0043169">
    <property type="term" value="F:cation binding"/>
    <property type="evidence" value="ECO:0007669"/>
    <property type="project" value="InterPro"/>
</dbReference>
<dbReference type="GO" id="GO:0004553">
    <property type="term" value="F:hydrolase activity, hydrolyzing O-glycosyl compounds"/>
    <property type="evidence" value="ECO:0007669"/>
    <property type="project" value="InterPro"/>
</dbReference>
<dbReference type="GO" id="GO:0005978">
    <property type="term" value="P:glycogen biosynthetic process"/>
    <property type="evidence" value="ECO:0007669"/>
    <property type="project" value="UniProtKB-UniRule"/>
</dbReference>
<dbReference type="CDD" id="cd11322">
    <property type="entry name" value="AmyAc_Glg_BE"/>
    <property type="match status" value="1"/>
</dbReference>
<dbReference type="CDD" id="cd02855">
    <property type="entry name" value="E_set_GBE_prok_N"/>
    <property type="match status" value="1"/>
</dbReference>
<dbReference type="FunFam" id="2.60.40.10:FF:000169">
    <property type="entry name" value="1,4-alpha-glucan branching enzyme GlgB"/>
    <property type="match status" value="1"/>
</dbReference>
<dbReference type="FunFam" id="2.60.40.1180:FF:000002">
    <property type="entry name" value="1,4-alpha-glucan branching enzyme GlgB"/>
    <property type="match status" value="1"/>
</dbReference>
<dbReference type="FunFam" id="3.20.20.80:FF:000003">
    <property type="entry name" value="1,4-alpha-glucan branching enzyme GlgB"/>
    <property type="match status" value="1"/>
</dbReference>
<dbReference type="Gene3D" id="3.20.20.80">
    <property type="entry name" value="Glycosidases"/>
    <property type="match status" value="1"/>
</dbReference>
<dbReference type="Gene3D" id="2.60.40.1180">
    <property type="entry name" value="Golgi alpha-mannosidase II"/>
    <property type="match status" value="1"/>
</dbReference>
<dbReference type="Gene3D" id="2.60.40.10">
    <property type="entry name" value="Immunoglobulins"/>
    <property type="match status" value="1"/>
</dbReference>
<dbReference type="HAMAP" id="MF_00685">
    <property type="entry name" value="GlgB"/>
    <property type="match status" value="1"/>
</dbReference>
<dbReference type="InterPro" id="IPR006048">
    <property type="entry name" value="A-amylase/branching_C"/>
</dbReference>
<dbReference type="InterPro" id="IPR037439">
    <property type="entry name" value="Branching_enzy"/>
</dbReference>
<dbReference type="InterPro" id="IPR006407">
    <property type="entry name" value="GlgB"/>
</dbReference>
<dbReference type="InterPro" id="IPR054169">
    <property type="entry name" value="GlgB_N"/>
</dbReference>
<dbReference type="InterPro" id="IPR044143">
    <property type="entry name" value="GlgB_N_E_set_prok"/>
</dbReference>
<dbReference type="InterPro" id="IPR006047">
    <property type="entry name" value="Glyco_hydro_13_cat_dom"/>
</dbReference>
<dbReference type="InterPro" id="IPR004193">
    <property type="entry name" value="Glyco_hydro_13_N"/>
</dbReference>
<dbReference type="InterPro" id="IPR013780">
    <property type="entry name" value="Glyco_hydro_b"/>
</dbReference>
<dbReference type="InterPro" id="IPR017853">
    <property type="entry name" value="Glycoside_hydrolase_SF"/>
</dbReference>
<dbReference type="InterPro" id="IPR013783">
    <property type="entry name" value="Ig-like_fold"/>
</dbReference>
<dbReference type="InterPro" id="IPR014756">
    <property type="entry name" value="Ig_E-set"/>
</dbReference>
<dbReference type="NCBIfam" id="TIGR01515">
    <property type="entry name" value="branching_enzym"/>
    <property type="match status" value="1"/>
</dbReference>
<dbReference type="NCBIfam" id="NF003811">
    <property type="entry name" value="PRK05402.1"/>
    <property type="match status" value="1"/>
</dbReference>
<dbReference type="NCBIfam" id="NF008967">
    <property type="entry name" value="PRK12313.1"/>
    <property type="match status" value="1"/>
</dbReference>
<dbReference type="PANTHER" id="PTHR43651">
    <property type="entry name" value="1,4-ALPHA-GLUCAN-BRANCHING ENZYME"/>
    <property type="match status" value="1"/>
</dbReference>
<dbReference type="PANTHER" id="PTHR43651:SF3">
    <property type="entry name" value="1,4-ALPHA-GLUCAN-BRANCHING ENZYME"/>
    <property type="match status" value="1"/>
</dbReference>
<dbReference type="Pfam" id="PF02806">
    <property type="entry name" value="Alpha-amylase_C"/>
    <property type="match status" value="1"/>
</dbReference>
<dbReference type="Pfam" id="PF02922">
    <property type="entry name" value="CBM_48"/>
    <property type="match status" value="1"/>
</dbReference>
<dbReference type="Pfam" id="PF22019">
    <property type="entry name" value="GlgB_N"/>
    <property type="match status" value="1"/>
</dbReference>
<dbReference type="PIRSF" id="PIRSF000463">
    <property type="entry name" value="GlgB"/>
    <property type="match status" value="1"/>
</dbReference>
<dbReference type="SMART" id="SM00642">
    <property type="entry name" value="Aamy"/>
    <property type="match status" value="1"/>
</dbReference>
<dbReference type="SUPFAM" id="SSF51445">
    <property type="entry name" value="(Trans)glycosidases"/>
    <property type="match status" value="1"/>
</dbReference>
<dbReference type="SUPFAM" id="SSF81296">
    <property type="entry name" value="E set domains"/>
    <property type="match status" value="1"/>
</dbReference>
<dbReference type="SUPFAM" id="SSF51011">
    <property type="entry name" value="Glycosyl hydrolase domain"/>
    <property type="match status" value="1"/>
</dbReference>